<name>HISX_LEGPH</name>
<dbReference type="EC" id="1.1.1.23" evidence="1"/>
<dbReference type="EMBL" id="AE017354">
    <property type="protein sequence ID" value="AAU27284.1"/>
    <property type="molecule type" value="Genomic_DNA"/>
</dbReference>
<dbReference type="RefSeq" id="WP_010946932.1">
    <property type="nucleotide sequence ID" value="NC_002942.5"/>
</dbReference>
<dbReference type="RefSeq" id="YP_095231.1">
    <property type="nucleotide sequence ID" value="NC_002942.5"/>
</dbReference>
<dbReference type="SMR" id="Q5ZW87"/>
<dbReference type="STRING" id="272624.lpg1199"/>
<dbReference type="PaxDb" id="272624-lpg1199"/>
<dbReference type="GeneID" id="57035189"/>
<dbReference type="KEGG" id="lpn:lpg1199"/>
<dbReference type="PATRIC" id="fig|272624.6.peg.1261"/>
<dbReference type="eggNOG" id="COG0141">
    <property type="taxonomic scope" value="Bacteria"/>
</dbReference>
<dbReference type="HOGENOM" id="CLU_006732_3_0_6"/>
<dbReference type="OrthoDB" id="9805269at2"/>
<dbReference type="UniPathway" id="UPA00031">
    <property type="reaction ID" value="UER00014"/>
</dbReference>
<dbReference type="Proteomes" id="UP000000609">
    <property type="component" value="Chromosome"/>
</dbReference>
<dbReference type="GO" id="GO:0005829">
    <property type="term" value="C:cytosol"/>
    <property type="evidence" value="ECO:0007669"/>
    <property type="project" value="TreeGrafter"/>
</dbReference>
<dbReference type="GO" id="GO:0004399">
    <property type="term" value="F:histidinol dehydrogenase activity"/>
    <property type="evidence" value="ECO:0007669"/>
    <property type="project" value="UniProtKB-UniRule"/>
</dbReference>
<dbReference type="GO" id="GO:0051287">
    <property type="term" value="F:NAD binding"/>
    <property type="evidence" value="ECO:0007669"/>
    <property type="project" value="InterPro"/>
</dbReference>
<dbReference type="GO" id="GO:0008270">
    <property type="term" value="F:zinc ion binding"/>
    <property type="evidence" value="ECO:0007669"/>
    <property type="project" value="UniProtKB-UniRule"/>
</dbReference>
<dbReference type="GO" id="GO:0000105">
    <property type="term" value="P:L-histidine biosynthetic process"/>
    <property type="evidence" value="ECO:0007669"/>
    <property type="project" value="UniProtKB-UniRule"/>
</dbReference>
<dbReference type="CDD" id="cd06572">
    <property type="entry name" value="Histidinol_dh"/>
    <property type="match status" value="1"/>
</dbReference>
<dbReference type="FunFam" id="3.40.50.1980:FF:000001">
    <property type="entry name" value="Histidinol dehydrogenase"/>
    <property type="match status" value="1"/>
</dbReference>
<dbReference type="FunFam" id="1.20.5.1300:FF:000002">
    <property type="entry name" value="Histidinol dehydrogenase, chloroplastic"/>
    <property type="match status" value="1"/>
</dbReference>
<dbReference type="FunFam" id="3.40.50.1980:FF:000002">
    <property type="entry name" value="Histidinol dehydrogenase, chloroplastic"/>
    <property type="match status" value="1"/>
</dbReference>
<dbReference type="Gene3D" id="1.20.5.1300">
    <property type="match status" value="1"/>
</dbReference>
<dbReference type="Gene3D" id="3.40.50.1980">
    <property type="entry name" value="Nitrogenase molybdenum iron protein domain"/>
    <property type="match status" value="2"/>
</dbReference>
<dbReference type="HAMAP" id="MF_01024">
    <property type="entry name" value="HisD"/>
    <property type="match status" value="1"/>
</dbReference>
<dbReference type="InterPro" id="IPR016161">
    <property type="entry name" value="Ald_DH/histidinol_DH"/>
</dbReference>
<dbReference type="InterPro" id="IPR001692">
    <property type="entry name" value="Histidinol_DH_CS"/>
</dbReference>
<dbReference type="InterPro" id="IPR022695">
    <property type="entry name" value="Histidinol_DH_monofunct"/>
</dbReference>
<dbReference type="InterPro" id="IPR012131">
    <property type="entry name" value="Hstdl_DH"/>
</dbReference>
<dbReference type="NCBIfam" id="TIGR00069">
    <property type="entry name" value="hisD"/>
    <property type="match status" value="1"/>
</dbReference>
<dbReference type="PANTHER" id="PTHR21256:SF2">
    <property type="entry name" value="HISTIDINE BIOSYNTHESIS TRIFUNCTIONAL PROTEIN"/>
    <property type="match status" value="1"/>
</dbReference>
<dbReference type="PANTHER" id="PTHR21256">
    <property type="entry name" value="HISTIDINOL DEHYDROGENASE HDH"/>
    <property type="match status" value="1"/>
</dbReference>
<dbReference type="Pfam" id="PF00815">
    <property type="entry name" value="Histidinol_dh"/>
    <property type="match status" value="1"/>
</dbReference>
<dbReference type="PIRSF" id="PIRSF000099">
    <property type="entry name" value="Histidinol_dh"/>
    <property type="match status" value="1"/>
</dbReference>
<dbReference type="PRINTS" id="PR00083">
    <property type="entry name" value="HOLDHDRGNASE"/>
</dbReference>
<dbReference type="SUPFAM" id="SSF53720">
    <property type="entry name" value="ALDH-like"/>
    <property type="match status" value="1"/>
</dbReference>
<dbReference type="PROSITE" id="PS00611">
    <property type="entry name" value="HISOL_DEHYDROGENASE"/>
    <property type="match status" value="1"/>
</dbReference>
<protein>
    <recommendedName>
        <fullName evidence="1">Histidinol dehydrogenase</fullName>
        <shortName evidence="1">HDH</shortName>
        <ecNumber evidence="1">1.1.1.23</ecNumber>
    </recommendedName>
</protein>
<proteinExistence type="inferred from homology"/>
<feature type="chain" id="PRO_0000135786" description="Histidinol dehydrogenase">
    <location>
        <begin position="1"/>
        <end position="431"/>
    </location>
</feature>
<feature type="active site" description="Proton acceptor" evidence="1">
    <location>
        <position position="325"/>
    </location>
</feature>
<feature type="active site" description="Proton acceptor" evidence="1">
    <location>
        <position position="326"/>
    </location>
</feature>
<feature type="binding site" evidence="1">
    <location>
        <position position="124"/>
    </location>
    <ligand>
        <name>NAD(+)</name>
        <dbReference type="ChEBI" id="CHEBI:57540"/>
    </ligand>
</feature>
<feature type="binding site" evidence="1">
    <location>
        <position position="187"/>
    </location>
    <ligand>
        <name>NAD(+)</name>
        <dbReference type="ChEBI" id="CHEBI:57540"/>
    </ligand>
</feature>
<feature type="binding site" evidence="1">
    <location>
        <position position="210"/>
    </location>
    <ligand>
        <name>NAD(+)</name>
        <dbReference type="ChEBI" id="CHEBI:57540"/>
    </ligand>
</feature>
<feature type="binding site" evidence="1">
    <location>
        <position position="236"/>
    </location>
    <ligand>
        <name>substrate</name>
    </ligand>
</feature>
<feature type="binding site" evidence="1">
    <location>
        <position position="258"/>
    </location>
    <ligand>
        <name>substrate</name>
    </ligand>
</feature>
<feature type="binding site" evidence="1">
    <location>
        <position position="258"/>
    </location>
    <ligand>
        <name>Zn(2+)</name>
        <dbReference type="ChEBI" id="CHEBI:29105"/>
    </ligand>
</feature>
<feature type="binding site" evidence="1">
    <location>
        <position position="261"/>
    </location>
    <ligand>
        <name>substrate</name>
    </ligand>
</feature>
<feature type="binding site" evidence="1">
    <location>
        <position position="261"/>
    </location>
    <ligand>
        <name>Zn(2+)</name>
        <dbReference type="ChEBI" id="CHEBI:29105"/>
    </ligand>
</feature>
<feature type="binding site" evidence="1">
    <location>
        <position position="326"/>
    </location>
    <ligand>
        <name>substrate</name>
    </ligand>
</feature>
<feature type="binding site" evidence="1">
    <location>
        <position position="359"/>
    </location>
    <ligand>
        <name>substrate</name>
    </ligand>
</feature>
<feature type="binding site" evidence="1">
    <location>
        <position position="359"/>
    </location>
    <ligand>
        <name>Zn(2+)</name>
        <dbReference type="ChEBI" id="CHEBI:29105"/>
    </ligand>
</feature>
<feature type="binding site" evidence="1">
    <location>
        <position position="413"/>
    </location>
    <ligand>
        <name>substrate</name>
    </ligand>
</feature>
<feature type="binding site" evidence="1">
    <location>
        <position position="418"/>
    </location>
    <ligand>
        <name>substrate</name>
    </ligand>
</feature>
<feature type="binding site" evidence="1">
    <location>
        <position position="418"/>
    </location>
    <ligand>
        <name>Zn(2+)</name>
        <dbReference type="ChEBI" id="CHEBI:29105"/>
    </ligand>
</feature>
<keyword id="KW-0028">Amino-acid biosynthesis</keyword>
<keyword id="KW-0368">Histidine biosynthesis</keyword>
<keyword id="KW-0479">Metal-binding</keyword>
<keyword id="KW-0520">NAD</keyword>
<keyword id="KW-0560">Oxidoreductase</keyword>
<keyword id="KW-1185">Reference proteome</keyword>
<keyword id="KW-0862">Zinc</keyword>
<evidence type="ECO:0000255" key="1">
    <source>
        <dbReference type="HAMAP-Rule" id="MF_01024"/>
    </source>
</evidence>
<sequence>MLTIKNWQLLSENDKKLCLSRPRQSSAIKENVLEIINQVQLSGDKALYDLTKQFDRVNLQYLQVPQEKIEQANIPKNALNAITQAIGTISSYHQSLLPENTEISTASGITIRNVYRPIQKVGLYVPGGNKTPLVSSLLMQAIPAKVAGCPIKVLCTPPDAEGEINEHILVAARLCGIDTIYAIGGAQAIAAMAYGTESVIKVDKIFGPGNSYVTQAKTLVAIDADGAAIDMPAGPSEVMILADTEANPEFIAADLLAQAEHGPDSQVILICDECELANQVNQQLEIQMSYLSRIEFIKRSLANSRIIICSNQSEQLDIINSYAPEHLIINRKNPEPWVEKIVAAGTVFLGSWAAETMGDYVTGSNHVLPTSGFARNHSGLSTLDFMTRFTVQAINQEAIRNLGPAAMTLAELEGLDAHANAVQIRLNTLGD</sequence>
<gene>
    <name evidence="1" type="primary">hisD</name>
    <name type="ordered locus">lpg1199</name>
</gene>
<comment type="function">
    <text evidence="1">Catalyzes the sequential NAD-dependent oxidations of L-histidinol to L-histidinaldehyde and then to L-histidine.</text>
</comment>
<comment type="catalytic activity">
    <reaction evidence="1">
        <text>L-histidinol + 2 NAD(+) + H2O = L-histidine + 2 NADH + 3 H(+)</text>
        <dbReference type="Rhea" id="RHEA:20641"/>
        <dbReference type="ChEBI" id="CHEBI:15377"/>
        <dbReference type="ChEBI" id="CHEBI:15378"/>
        <dbReference type="ChEBI" id="CHEBI:57540"/>
        <dbReference type="ChEBI" id="CHEBI:57595"/>
        <dbReference type="ChEBI" id="CHEBI:57699"/>
        <dbReference type="ChEBI" id="CHEBI:57945"/>
        <dbReference type="EC" id="1.1.1.23"/>
    </reaction>
</comment>
<comment type="cofactor">
    <cofactor evidence="1">
        <name>Zn(2+)</name>
        <dbReference type="ChEBI" id="CHEBI:29105"/>
    </cofactor>
    <text evidence="1">Binds 1 zinc ion per subunit.</text>
</comment>
<comment type="pathway">
    <text evidence="1">Amino-acid biosynthesis; L-histidine biosynthesis; L-histidine from 5-phospho-alpha-D-ribose 1-diphosphate: step 9/9.</text>
</comment>
<comment type="similarity">
    <text evidence="1">Belongs to the histidinol dehydrogenase family.</text>
</comment>
<organism>
    <name type="scientific">Legionella pneumophila subsp. pneumophila (strain Philadelphia 1 / ATCC 33152 / DSM 7513)</name>
    <dbReference type="NCBI Taxonomy" id="272624"/>
    <lineage>
        <taxon>Bacteria</taxon>
        <taxon>Pseudomonadati</taxon>
        <taxon>Pseudomonadota</taxon>
        <taxon>Gammaproteobacteria</taxon>
        <taxon>Legionellales</taxon>
        <taxon>Legionellaceae</taxon>
        <taxon>Legionella</taxon>
    </lineage>
</organism>
<accession>Q5ZW87</accession>
<reference key="1">
    <citation type="journal article" date="2004" name="Science">
        <title>The genomic sequence of the accidental pathogen Legionella pneumophila.</title>
        <authorList>
            <person name="Chien M."/>
            <person name="Morozova I."/>
            <person name="Shi S."/>
            <person name="Sheng H."/>
            <person name="Chen J."/>
            <person name="Gomez S.M."/>
            <person name="Asamani G."/>
            <person name="Hill K."/>
            <person name="Nuara J."/>
            <person name="Feder M."/>
            <person name="Rineer J."/>
            <person name="Greenberg J.J."/>
            <person name="Steshenko V."/>
            <person name="Park S.H."/>
            <person name="Zhao B."/>
            <person name="Teplitskaya E."/>
            <person name="Edwards J.R."/>
            <person name="Pampou S."/>
            <person name="Georghiou A."/>
            <person name="Chou I.-C."/>
            <person name="Iannuccilli W."/>
            <person name="Ulz M.E."/>
            <person name="Kim D.H."/>
            <person name="Geringer-Sameth A."/>
            <person name="Goldsberry C."/>
            <person name="Morozov P."/>
            <person name="Fischer S.G."/>
            <person name="Segal G."/>
            <person name="Qu X."/>
            <person name="Rzhetsky A."/>
            <person name="Zhang P."/>
            <person name="Cayanis E."/>
            <person name="De Jong P.J."/>
            <person name="Ju J."/>
            <person name="Kalachikov S."/>
            <person name="Shuman H.A."/>
            <person name="Russo J.J."/>
        </authorList>
    </citation>
    <scope>NUCLEOTIDE SEQUENCE [LARGE SCALE GENOMIC DNA]</scope>
    <source>
        <strain>Philadelphia 1 / ATCC 33152 / DSM 7513</strain>
    </source>
</reference>